<feature type="chain" id="PRO_0000164772" description="Gene 46 protein">
    <location>
        <begin position="1"/>
        <end position="142"/>
    </location>
</feature>
<feature type="region of interest" description="Disordered" evidence="1">
    <location>
        <begin position="82"/>
        <end position="101"/>
    </location>
</feature>
<evidence type="ECO:0000256" key="1">
    <source>
        <dbReference type="SAM" id="MobiDB-lite"/>
    </source>
</evidence>
<keyword id="KW-1185">Reference proteome</keyword>
<accession>Q05257</accession>
<proteinExistence type="predicted"/>
<organismHost>
    <name type="scientific">Mycobacterium</name>
    <dbReference type="NCBI Taxonomy" id="1763"/>
</organismHost>
<name>VG46_BPML5</name>
<dbReference type="EMBL" id="Z18946">
    <property type="protein sequence ID" value="CAA79422.1"/>
    <property type="molecule type" value="Genomic_DNA"/>
</dbReference>
<dbReference type="PIR" id="S30991">
    <property type="entry name" value="S30991"/>
</dbReference>
<dbReference type="RefSeq" id="NP_039710.1">
    <property type="nucleotide sequence ID" value="NC_001335.1"/>
</dbReference>
<dbReference type="SMR" id="Q05257"/>
<dbReference type="GeneID" id="2942974"/>
<dbReference type="KEGG" id="vg:2942974"/>
<dbReference type="OrthoDB" id="21632at10239"/>
<dbReference type="Proteomes" id="UP000002123">
    <property type="component" value="Genome"/>
</dbReference>
<dbReference type="Gene3D" id="1.10.10.60">
    <property type="entry name" value="Homeodomain-like"/>
    <property type="match status" value="1"/>
</dbReference>
<protein>
    <recommendedName>
        <fullName>Gene 46 protein</fullName>
    </recommendedName>
    <alternativeName>
        <fullName>Gp46</fullName>
    </alternativeName>
</protein>
<organism>
    <name type="scientific">Mycobacterium phage L5</name>
    <name type="common">Mycobacteriophage L5</name>
    <dbReference type="NCBI Taxonomy" id="31757"/>
    <lineage>
        <taxon>Viruses</taxon>
        <taxon>Duplodnaviria</taxon>
        <taxon>Heunggongvirae</taxon>
        <taxon>Uroviricota</taxon>
        <taxon>Caudoviricetes</taxon>
        <taxon>Fromanvirus</taxon>
    </lineage>
</organism>
<gene>
    <name type="primary">46</name>
</gene>
<reference key="1">
    <citation type="journal article" date="1993" name="Mol. Microbiol.">
        <title>DNA sequence, structure and gene expression of mycobacteriophage L5: a phage system for mycobacterial genetics.</title>
        <authorList>
            <person name="Hatfull G.F."/>
            <person name="Sarkis G.J."/>
        </authorList>
    </citation>
    <scope>NUCLEOTIDE SEQUENCE [LARGE SCALE GENOMIC DNA]</scope>
</reference>
<sequence>MRKKHLKAALGEAQYKVSMLSEENNRLAIENQDKDYRITNLLGEVEVVREANVKLSQRLNEVLAANRRYAIKQRTQNELFGKALAQVKPETGPSRPNRKKLTEREVKDIRQAYLGGMKQKDLAENYGVNPATISRTVRGIYH</sequence>